<name>COAE_VIBVU</name>
<keyword id="KW-0067">ATP-binding</keyword>
<keyword id="KW-0173">Coenzyme A biosynthesis</keyword>
<keyword id="KW-0963">Cytoplasm</keyword>
<keyword id="KW-0418">Kinase</keyword>
<keyword id="KW-0547">Nucleotide-binding</keyword>
<keyword id="KW-0808">Transferase</keyword>
<reference key="1">
    <citation type="submission" date="1996-02" db="EMBL/GenBank/DDBJ databases">
        <authorList>
            <person name="Strom M.S."/>
            <person name="Lara J.C."/>
        </authorList>
    </citation>
    <scope>NUCLEOTIDE SEQUENCE [GENOMIC DNA]</scope>
    <source>
        <strain>MO6-24</strain>
    </source>
</reference>
<reference key="2">
    <citation type="submission" date="2002-12" db="EMBL/GenBank/DDBJ databases">
        <title>Complete genome sequence of Vibrio vulnificus CMCP6.</title>
        <authorList>
            <person name="Rhee J.H."/>
            <person name="Kim S.Y."/>
            <person name="Chung S.S."/>
            <person name="Kim J.J."/>
            <person name="Moon Y.H."/>
            <person name="Jeong H."/>
            <person name="Choy H.E."/>
        </authorList>
    </citation>
    <scope>NUCLEOTIDE SEQUENCE [LARGE SCALE GENOMIC DNA]</scope>
    <source>
        <strain>CMCP6</strain>
    </source>
</reference>
<reference key="3">
    <citation type="journal article" date="2011" name="Mol. Syst. Biol.">
        <title>Integrative genome-scale metabolic analysis of Vibrio vulnificus for drug targeting and discovery.</title>
        <authorList>
            <person name="Kim H.U."/>
            <person name="Kim S.Y."/>
            <person name="Jeong H."/>
            <person name="Kim T.Y."/>
            <person name="Kim J.J."/>
            <person name="Choy H.E."/>
            <person name="Yi K.Y."/>
            <person name="Rhee J.H."/>
            <person name="Lee S.Y."/>
        </authorList>
    </citation>
    <scope>SEQUENCE REVISION</scope>
    <source>
        <strain>CMCP6</strain>
    </source>
</reference>
<proteinExistence type="inferred from homology"/>
<evidence type="ECO:0000255" key="1">
    <source>
        <dbReference type="HAMAP-Rule" id="MF_00376"/>
    </source>
</evidence>
<evidence type="ECO:0000305" key="2"/>
<protein>
    <recommendedName>
        <fullName evidence="1">Dephospho-CoA kinase</fullName>
        <ecNumber evidence="1">2.7.1.24</ecNumber>
    </recommendedName>
    <alternativeName>
        <fullName evidence="1">Dephosphocoenzyme A kinase</fullName>
    </alternativeName>
</protein>
<feature type="chain" id="PRO_0000173029" description="Dephospho-CoA kinase">
    <location>
        <begin position="1"/>
        <end position="202"/>
    </location>
</feature>
<feature type="domain" description="DPCK" evidence="1">
    <location>
        <begin position="4"/>
        <end position="201"/>
    </location>
</feature>
<feature type="binding site" evidence="1">
    <location>
        <begin position="12"/>
        <end position="17"/>
    </location>
    <ligand>
        <name>ATP</name>
        <dbReference type="ChEBI" id="CHEBI:30616"/>
    </ligand>
</feature>
<feature type="sequence conflict" description="In Ref. 1; AAA91207." evidence="2" ref="1">
    <original>S</original>
    <variation>A</variation>
    <location>
        <position position="79"/>
    </location>
</feature>
<feature type="sequence conflict" description="In Ref. 1; AAA91207." evidence="2" ref="1">
    <original>S</original>
    <variation>G</variation>
    <location>
        <position position="147"/>
    </location>
</feature>
<dbReference type="EC" id="2.7.1.24" evidence="1"/>
<dbReference type="EMBL" id="U48808">
    <property type="protein sequence ID" value="AAA91207.1"/>
    <property type="molecule type" value="Genomic_DNA"/>
</dbReference>
<dbReference type="EMBL" id="AE016795">
    <property type="protein sequence ID" value="AAO10041.2"/>
    <property type="molecule type" value="Genomic_DNA"/>
</dbReference>
<dbReference type="RefSeq" id="WP_011079547.1">
    <property type="nucleotide sequence ID" value="NC_004459.3"/>
</dbReference>
<dbReference type="SMR" id="Q56741"/>
<dbReference type="KEGG" id="vvu:VV1_1622"/>
<dbReference type="HOGENOM" id="CLU_057180_1_2_6"/>
<dbReference type="UniPathway" id="UPA00241">
    <property type="reaction ID" value="UER00356"/>
</dbReference>
<dbReference type="Proteomes" id="UP000002275">
    <property type="component" value="Chromosome 1"/>
</dbReference>
<dbReference type="GO" id="GO:0005737">
    <property type="term" value="C:cytoplasm"/>
    <property type="evidence" value="ECO:0007669"/>
    <property type="project" value="UniProtKB-SubCell"/>
</dbReference>
<dbReference type="GO" id="GO:0005524">
    <property type="term" value="F:ATP binding"/>
    <property type="evidence" value="ECO:0007669"/>
    <property type="project" value="UniProtKB-UniRule"/>
</dbReference>
<dbReference type="GO" id="GO:0004140">
    <property type="term" value="F:dephospho-CoA kinase activity"/>
    <property type="evidence" value="ECO:0007669"/>
    <property type="project" value="UniProtKB-UniRule"/>
</dbReference>
<dbReference type="GO" id="GO:0015937">
    <property type="term" value="P:coenzyme A biosynthetic process"/>
    <property type="evidence" value="ECO:0007669"/>
    <property type="project" value="UniProtKB-UniRule"/>
</dbReference>
<dbReference type="CDD" id="cd02022">
    <property type="entry name" value="DPCK"/>
    <property type="match status" value="1"/>
</dbReference>
<dbReference type="FunFam" id="3.40.50.300:FF:000518">
    <property type="entry name" value="Dephospho-CoA kinase"/>
    <property type="match status" value="1"/>
</dbReference>
<dbReference type="Gene3D" id="3.40.50.300">
    <property type="entry name" value="P-loop containing nucleotide triphosphate hydrolases"/>
    <property type="match status" value="1"/>
</dbReference>
<dbReference type="HAMAP" id="MF_00376">
    <property type="entry name" value="Dephospho_CoA_kinase"/>
    <property type="match status" value="1"/>
</dbReference>
<dbReference type="InterPro" id="IPR001977">
    <property type="entry name" value="Depp_CoAkinase"/>
</dbReference>
<dbReference type="InterPro" id="IPR027417">
    <property type="entry name" value="P-loop_NTPase"/>
</dbReference>
<dbReference type="NCBIfam" id="TIGR00152">
    <property type="entry name" value="dephospho-CoA kinase"/>
    <property type="match status" value="1"/>
</dbReference>
<dbReference type="PANTHER" id="PTHR10695:SF46">
    <property type="entry name" value="BIFUNCTIONAL COENZYME A SYNTHASE-RELATED"/>
    <property type="match status" value="1"/>
</dbReference>
<dbReference type="PANTHER" id="PTHR10695">
    <property type="entry name" value="DEPHOSPHO-COA KINASE-RELATED"/>
    <property type="match status" value="1"/>
</dbReference>
<dbReference type="Pfam" id="PF01121">
    <property type="entry name" value="CoaE"/>
    <property type="match status" value="1"/>
</dbReference>
<dbReference type="SUPFAM" id="SSF52540">
    <property type="entry name" value="P-loop containing nucleoside triphosphate hydrolases"/>
    <property type="match status" value="1"/>
</dbReference>
<dbReference type="PROSITE" id="PS51219">
    <property type="entry name" value="DPCK"/>
    <property type="match status" value="1"/>
</dbReference>
<gene>
    <name evidence="1" type="primary">coaE</name>
    <name type="ordered locus">VV1_1622</name>
    <name type="ordered locus">VV1_1621</name>
</gene>
<sequence>MALVIGLTGGIASGKTTVANLFQQHFAIDIVDADIVARQVVAPGSAGLAAIVDHFGADILTCEGELDRGQLRQRIFAHSEEKQWLNALLHPMIRRKMIEDLAQVSSPYALLVVPLLVENQLQTLCDRVLVVDVEEKTQLQRTMDRDSVDEQQVRAILKAQASRHERLALADDVIKNESKDQDLLQQITDLHQKYLAMSKQNR</sequence>
<organism>
    <name type="scientific">Vibrio vulnificus (strain CMCP6)</name>
    <dbReference type="NCBI Taxonomy" id="216895"/>
    <lineage>
        <taxon>Bacteria</taxon>
        <taxon>Pseudomonadati</taxon>
        <taxon>Pseudomonadota</taxon>
        <taxon>Gammaproteobacteria</taxon>
        <taxon>Vibrionales</taxon>
        <taxon>Vibrionaceae</taxon>
        <taxon>Vibrio</taxon>
    </lineage>
</organism>
<accession>Q56741</accession>
<comment type="function">
    <text evidence="1">Catalyzes the phosphorylation of the 3'-hydroxyl group of dephosphocoenzyme A to form coenzyme A.</text>
</comment>
<comment type="catalytic activity">
    <reaction evidence="1">
        <text>3'-dephospho-CoA + ATP = ADP + CoA + H(+)</text>
        <dbReference type="Rhea" id="RHEA:18245"/>
        <dbReference type="ChEBI" id="CHEBI:15378"/>
        <dbReference type="ChEBI" id="CHEBI:30616"/>
        <dbReference type="ChEBI" id="CHEBI:57287"/>
        <dbReference type="ChEBI" id="CHEBI:57328"/>
        <dbReference type="ChEBI" id="CHEBI:456216"/>
        <dbReference type="EC" id="2.7.1.24"/>
    </reaction>
</comment>
<comment type="pathway">
    <text evidence="1">Cofactor biosynthesis; coenzyme A biosynthesis; CoA from (R)-pantothenate: step 5/5.</text>
</comment>
<comment type="subcellular location">
    <subcellularLocation>
        <location evidence="1">Cytoplasm</location>
    </subcellularLocation>
</comment>
<comment type="similarity">
    <text evidence="1 2">Belongs to the CoaE family.</text>
</comment>